<accession>Q030Z9</accession>
<name>RPOE_LACLS</name>
<organism>
    <name type="scientific">Lactococcus lactis subsp. cremoris (strain SK11)</name>
    <dbReference type="NCBI Taxonomy" id="272622"/>
    <lineage>
        <taxon>Bacteria</taxon>
        <taxon>Bacillati</taxon>
        <taxon>Bacillota</taxon>
        <taxon>Bacilli</taxon>
        <taxon>Lactobacillales</taxon>
        <taxon>Streptococcaceae</taxon>
        <taxon>Lactococcus</taxon>
        <taxon>Lactococcus cremoris subsp. cremoris</taxon>
    </lineage>
</organism>
<gene>
    <name evidence="1" type="primary">rpoE</name>
    <name type="ordered locus">LACR_0658</name>
</gene>
<evidence type="ECO:0000255" key="1">
    <source>
        <dbReference type="HAMAP-Rule" id="MF_00357"/>
    </source>
</evidence>
<evidence type="ECO:0000255" key="2">
    <source>
        <dbReference type="PROSITE-ProRule" id="PRU01261"/>
    </source>
</evidence>
<evidence type="ECO:0000256" key="3">
    <source>
        <dbReference type="SAM" id="MobiDB-lite"/>
    </source>
</evidence>
<dbReference type="EMBL" id="CP000425">
    <property type="protein sequence ID" value="ABJ72223.1"/>
    <property type="molecule type" value="Genomic_DNA"/>
</dbReference>
<dbReference type="RefSeq" id="WP_011675775.1">
    <property type="nucleotide sequence ID" value="NC_008527.1"/>
</dbReference>
<dbReference type="SMR" id="Q030Z9"/>
<dbReference type="KEGG" id="llc:LACR_0658"/>
<dbReference type="HOGENOM" id="CLU_116648_0_0_9"/>
<dbReference type="Proteomes" id="UP000000240">
    <property type="component" value="Chromosome"/>
</dbReference>
<dbReference type="GO" id="GO:0000428">
    <property type="term" value="C:DNA-directed RNA polymerase complex"/>
    <property type="evidence" value="ECO:0007669"/>
    <property type="project" value="UniProtKB-KW"/>
</dbReference>
<dbReference type="GO" id="GO:0003899">
    <property type="term" value="F:DNA-directed RNA polymerase activity"/>
    <property type="evidence" value="ECO:0007669"/>
    <property type="project" value="UniProtKB-UniRule"/>
</dbReference>
<dbReference type="GO" id="GO:0006351">
    <property type="term" value="P:DNA-templated transcription"/>
    <property type="evidence" value="ECO:0007669"/>
    <property type="project" value="InterPro"/>
</dbReference>
<dbReference type="GO" id="GO:0006355">
    <property type="term" value="P:regulation of DNA-templated transcription"/>
    <property type="evidence" value="ECO:0007669"/>
    <property type="project" value="UniProtKB-UniRule"/>
</dbReference>
<dbReference type="Gene3D" id="1.10.10.1250">
    <property type="entry name" value="RNA polymerase, subunit delta, N-terminal domain"/>
    <property type="match status" value="1"/>
</dbReference>
<dbReference type="HAMAP" id="MF_00357">
    <property type="entry name" value="RNApol_bact_RpoE"/>
    <property type="match status" value="1"/>
</dbReference>
<dbReference type="InterPro" id="IPR007759">
    <property type="entry name" value="Asxl_HARE-HTH"/>
</dbReference>
<dbReference type="InterPro" id="IPR038087">
    <property type="entry name" value="RNAP_delta_N_dom_sf"/>
</dbReference>
<dbReference type="InterPro" id="IPR029757">
    <property type="entry name" value="RpoE"/>
</dbReference>
<dbReference type="NCBIfam" id="TIGR04567">
    <property type="entry name" value="RNAP_delt_lowGC"/>
    <property type="match status" value="1"/>
</dbReference>
<dbReference type="Pfam" id="PF05066">
    <property type="entry name" value="HARE-HTH"/>
    <property type="match status" value="1"/>
</dbReference>
<dbReference type="PROSITE" id="PS51913">
    <property type="entry name" value="HTH_HARE"/>
    <property type="match status" value="1"/>
</dbReference>
<feature type="chain" id="PRO_0000303131" description="Probable DNA-directed RNA polymerase subunit delta">
    <location>
        <begin position="1"/>
        <end position="187"/>
    </location>
</feature>
<feature type="domain" description="HTH HARE-type" evidence="2">
    <location>
        <begin position="14"/>
        <end position="81"/>
    </location>
</feature>
<feature type="region of interest" description="Disordered" evidence="3">
    <location>
        <begin position="96"/>
        <end position="187"/>
    </location>
</feature>
<feature type="compositionally biased region" description="Acidic residues" evidence="3">
    <location>
        <begin position="117"/>
        <end position="149"/>
    </location>
</feature>
<feature type="compositionally biased region" description="Acidic residues" evidence="3">
    <location>
        <begin position="157"/>
        <end position="187"/>
    </location>
</feature>
<protein>
    <recommendedName>
        <fullName evidence="1">Probable DNA-directed RNA polymerase subunit delta</fullName>
    </recommendedName>
    <alternativeName>
        <fullName evidence="1">RNAP delta factor</fullName>
    </alternativeName>
</protein>
<sequence length="187" mass="21332">MKITALEGQKISELSMIEVAHALLEQNGKEMQFSEIIRAIQDYLEKSDDEIKASISSFYTEINTDGSFIPLGNNVWALRSWYAIDEIDEEVIALDEIEDEEEEKPAKKRKKVNAFGIEDEIDPEDEEGTKETTEEDMSYDTQAEDEDKDDVAAYDAELAEVELDNVDEEVDIELEDDEDDSDDTDED</sequence>
<comment type="function">
    <text evidence="1">Participates in both the initiation and recycling phases of transcription. In the presence of the delta subunit, RNAP displays an increased specificity of transcription, a decreased affinity for nucleic acids, and an increased efficiency of RNA synthesis because of enhanced recycling.</text>
</comment>
<comment type="subunit">
    <text evidence="1">RNAP is composed of a core of 2 alpha, a beta and a beta' subunits. The core is associated with a delta subunit and one of several sigma factors.</text>
</comment>
<comment type="similarity">
    <text evidence="1">Belongs to the RpoE family.</text>
</comment>
<keyword id="KW-0240">DNA-directed RNA polymerase</keyword>
<keyword id="KW-0548">Nucleotidyltransferase</keyword>
<keyword id="KW-0804">Transcription</keyword>
<keyword id="KW-0808">Transferase</keyword>
<proteinExistence type="inferred from homology"/>
<reference key="1">
    <citation type="journal article" date="2006" name="Proc. Natl. Acad. Sci. U.S.A.">
        <title>Comparative genomics of the lactic acid bacteria.</title>
        <authorList>
            <person name="Makarova K.S."/>
            <person name="Slesarev A."/>
            <person name="Wolf Y.I."/>
            <person name="Sorokin A."/>
            <person name="Mirkin B."/>
            <person name="Koonin E.V."/>
            <person name="Pavlov A."/>
            <person name="Pavlova N."/>
            <person name="Karamychev V."/>
            <person name="Polouchine N."/>
            <person name="Shakhova V."/>
            <person name="Grigoriev I."/>
            <person name="Lou Y."/>
            <person name="Rohksar D."/>
            <person name="Lucas S."/>
            <person name="Huang K."/>
            <person name="Goodstein D.M."/>
            <person name="Hawkins T."/>
            <person name="Plengvidhya V."/>
            <person name="Welker D."/>
            <person name="Hughes J."/>
            <person name="Goh Y."/>
            <person name="Benson A."/>
            <person name="Baldwin K."/>
            <person name="Lee J.-H."/>
            <person name="Diaz-Muniz I."/>
            <person name="Dosti B."/>
            <person name="Smeianov V."/>
            <person name="Wechter W."/>
            <person name="Barabote R."/>
            <person name="Lorca G."/>
            <person name="Altermann E."/>
            <person name="Barrangou R."/>
            <person name="Ganesan B."/>
            <person name="Xie Y."/>
            <person name="Rawsthorne H."/>
            <person name="Tamir D."/>
            <person name="Parker C."/>
            <person name="Breidt F."/>
            <person name="Broadbent J.R."/>
            <person name="Hutkins R."/>
            <person name="O'Sullivan D."/>
            <person name="Steele J."/>
            <person name="Unlu G."/>
            <person name="Saier M.H. Jr."/>
            <person name="Klaenhammer T."/>
            <person name="Richardson P."/>
            <person name="Kozyavkin S."/>
            <person name="Weimer B.C."/>
            <person name="Mills D.A."/>
        </authorList>
    </citation>
    <scope>NUCLEOTIDE SEQUENCE [LARGE SCALE GENOMIC DNA]</scope>
    <source>
        <strain>SK11</strain>
    </source>
</reference>